<feature type="chain" id="PRO_1000062595" description="Acetyl-coenzyme A carboxylase carboxyl transferase subunit alpha">
    <location>
        <begin position="1"/>
        <end position="323"/>
    </location>
</feature>
<feature type="domain" description="CoA carboxyltransferase C-terminal" evidence="2">
    <location>
        <begin position="39"/>
        <end position="293"/>
    </location>
</feature>
<organism>
    <name type="scientific">Burkholderia vietnamiensis (strain G4 / LMG 22486)</name>
    <name type="common">Burkholderia cepacia (strain R1808)</name>
    <dbReference type="NCBI Taxonomy" id="269482"/>
    <lineage>
        <taxon>Bacteria</taxon>
        <taxon>Pseudomonadati</taxon>
        <taxon>Pseudomonadota</taxon>
        <taxon>Betaproteobacteria</taxon>
        <taxon>Burkholderiales</taxon>
        <taxon>Burkholderiaceae</taxon>
        <taxon>Burkholderia</taxon>
        <taxon>Burkholderia cepacia complex</taxon>
    </lineage>
</organism>
<proteinExistence type="inferred from homology"/>
<keyword id="KW-0067">ATP-binding</keyword>
<keyword id="KW-0963">Cytoplasm</keyword>
<keyword id="KW-0275">Fatty acid biosynthesis</keyword>
<keyword id="KW-0276">Fatty acid metabolism</keyword>
<keyword id="KW-0444">Lipid biosynthesis</keyword>
<keyword id="KW-0443">Lipid metabolism</keyword>
<keyword id="KW-0547">Nucleotide-binding</keyword>
<keyword id="KW-0808">Transferase</keyword>
<name>ACCA_BURVG</name>
<gene>
    <name evidence="1" type="primary">accA</name>
    <name type="ordered locus">Bcep1808_1978</name>
</gene>
<protein>
    <recommendedName>
        <fullName evidence="1">Acetyl-coenzyme A carboxylase carboxyl transferase subunit alpha</fullName>
        <shortName evidence="1">ACCase subunit alpha</shortName>
        <shortName evidence="1">Acetyl-CoA carboxylase carboxyltransferase subunit alpha</shortName>
        <ecNumber evidence="1">2.1.3.15</ecNumber>
    </recommendedName>
</protein>
<comment type="function">
    <text evidence="1">Component of the acetyl coenzyme A carboxylase (ACC) complex. First, biotin carboxylase catalyzes the carboxylation of biotin on its carrier protein (BCCP) and then the CO(2) group is transferred by the carboxyltransferase to acetyl-CoA to form malonyl-CoA.</text>
</comment>
<comment type="catalytic activity">
    <reaction evidence="1">
        <text>N(6)-carboxybiotinyl-L-lysyl-[protein] + acetyl-CoA = N(6)-biotinyl-L-lysyl-[protein] + malonyl-CoA</text>
        <dbReference type="Rhea" id="RHEA:54728"/>
        <dbReference type="Rhea" id="RHEA-COMP:10505"/>
        <dbReference type="Rhea" id="RHEA-COMP:10506"/>
        <dbReference type="ChEBI" id="CHEBI:57288"/>
        <dbReference type="ChEBI" id="CHEBI:57384"/>
        <dbReference type="ChEBI" id="CHEBI:83144"/>
        <dbReference type="ChEBI" id="CHEBI:83145"/>
        <dbReference type="EC" id="2.1.3.15"/>
    </reaction>
</comment>
<comment type="pathway">
    <text evidence="1">Lipid metabolism; malonyl-CoA biosynthesis; malonyl-CoA from acetyl-CoA: step 1/1.</text>
</comment>
<comment type="subunit">
    <text evidence="1">Acetyl-CoA carboxylase is a heterohexamer composed of biotin carboxyl carrier protein (AccB), biotin carboxylase (AccC) and two subunits each of ACCase subunit alpha (AccA) and ACCase subunit beta (AccD).</text>
</comment>
<comment type="subcellular location">
    <subcellularLocation>
        <location evidence="1">Cytoplasm</location>
    </subcellularLocation>
</comment>
<comment type="similarity">
    <text evidence="1">Belongs to the AccA family.</text>
</comment>
<reference key="1">
    <citation type="submission" date="2007-03" db="EMBL/GenBank/DDBJ databases">
        <title>Complete sequence of chromosome 1 of Burkholderia vietnamiensis G4.</title>
        <authorList>
            <consortium name="US DOE Joint Genome Institute"/>
            <person name="Copeland A."/>
            <person name="Lucas S."/>
            <person name="Lapidus A."/>
            <person name="Barry K."/>
            <person name="Detter J.C."/>
            <person name="Glavina del Rio T."/>
            <person name="Hammon N."/>
            <person name="Israni S."/>
            <person name="Dalin E."/>
            <person name="Tice H."/>
            <person name="Pitluck S."/>
            <person name="Chain P."/>
            <person name="Malfatti S."/>
            <person name="Shin M."/>
            <person name="Vergez L."/>
            <person name="Schmutz J."/>
            <person name="Larimer F."/>
            <person name="Land M."/>
            <person name="Hauser L."/>
            <person name="Kyrpides N."/>
            <person name="Tiedje J."/>
            <person name="Richardson P."/>
        </authorList>
    </citation>
    <scope>NUCLEOTIDE SEQUENCE [LARGE SCALE GENOMIC DNA]</scope>
    <source>
        <strain>G4 / LMG 22486</strain>
    </source>
</reference>
<accession>A4JFC8</accession>
<dbReference type="EC" id="2.1.3.15" evidence="1"/>
<dbReference type="EMBL" id="CP000614">
    <property type="protein sequence ID" value="ABO54981.1"/>
    <property type="molecule type" value="Genomic_DNA"/>
</dbReference>
<dbReference type="SMR" id="A4JFC8"/>
<dbReference type="KEGG" id="bvi:Bcep1808_1978"/>
<dbReference type="eggNOG" id="COG0825">
    <property type="taxonomic scope" value="Bacteria"/>
</dbReference>
<dbReference type="HOGENOM" id="CLU_015486_0_2_4"/>
<dbReference type="UniPathway" id="UPA00655">
    <property type="reaction ID" value="UER00711"/>
</dbReference>
<dbReference type="Proteomes" id="UP000002287">
    <property type="component" value="Chromosome 1"/>
</dbReference>
<dbReference type="GO" id="GO:0009317">
    <property type="term" value="C:acetyl-CoA carboxylase complex"/>
    <property type="evidence" value="ECO:0007669"/>
    <property type="project" value="InterPro"/>
</dbReference>
<dbReference type="GO" id="GO:0003989">
    <property type="term" value="F:acetyl-CoA carboxylase activity"/>
    <property type="evidence" value="ECO:0007669"/>
    <property type="project" value="InterPro"/>
</dbReference>
<dbReference type="GO" id="GO:0005524">
    <property type="term" value="F:ATP binding"/>
    <property type="evidence" value="ECO:0007669"/>
    <property type="project" value="UniProtKB-KW"/>
</dbReference>
<dbReference type="GO" id="GO:0016743">
    <property type="term" value="F:carboxyl- or carbamoyltransferase activity"/>
    <property type="evidence" value="ECO:0007669"/>
    <property type="project" value="UniProtKB-UniRule"/>
</dbReference>
<dbReference type="GO" id="GO:0006633">
    <property type="term" value="P:fatty acid biosynthetic process"/>
    <property type="evidence" value="ECO:0007669"/>
    <property type="project" value="UniProtKB-KW"/>
</dbReference>
<dbReference type="GO" id="GO:2001295">
    <property type="term" value="P:malonyl-CoA biosynthetic process"/>
    <property type="evidence" value="ECO:0007669"/>
    <property type="project" value="UniProtKB-UniRule"/>
</dbReference>
<dbReference type="Gene3D" id="3.90.226.10">
    <property type="entry name" value="2-enoyl-CoA Hydratase, Chain A, domain 1"/>
    <property type="match status" value="1"/>
</dbReference>
<dbReference type="HAMAP" id="MF_00823">
    <property type="entry name" value="AcetylCoA_CT_alpha"/>
    <property type="match status" value="1"/>
</dbReference>
<dbReference type="InterPro" id="IPR001095">
    <property type="entry name" value="Acetyl_CoA_COase_a_su"/>
</dbReference>
<dbReference type="InterPro" id="IPR029045">
    <property type="entry name" value="ClpP/crotonase-like_dom_sf"/>
</dbReference>
<dbReference type="InterPro" id="IPR011763">
    <property type="entry name" value="COA_CT_C"/>
</dbReference>
<dbReference type="NCBIfam" id="TIGR00513">
    <property type="entry name" value="accA"/>
    <property type="match status" value="1"/>
</dbReference>
<dbReference type="NCBIfam" id="NF041504">
    <property type="entry name" value="AccA_sub"/>
    <property type="match status" value="1"/>
</dbReference>
<dbReference type="NCBIfam" id="NF004344">
    <property type="entry name" value="PRK05724.1"/>
    <property type="match status" value="1"/>
</dbReference>
<dbReference type="PANTHER" id="PTHR42853">
    <property type="entry name" value="ACETYL-COENZYME A CARBOXYLASE CARBOXYL TRANSFERASE SUBUNIT ALPHA"/>
    <property type="match status" value="1"/>
</dbReference>
<dbReference type="PANTHER" id="PTHR42853:SF3">
    <property type="entry name" value="ACETYL-COENZYME A CARBOXYLASE CARBOXYL TRANSFERASE SUBUNIT ALPHA, CHLOROPLASTIC"/>
    <property type="match status" value="1"/>
</dbReference>
<dbReference type="Pfam" id="PF03255">
    <property type="entry name" value="ACCA"/>
    <property type="match status" value="1"/>
</dbReference>
<dbReference type="PRINTS" id="PR01069">
    <property type="entry name" value="ACCCTRFRASEA"/>
</dbReference>
<dbReference type="SUPFAM" id="SSF52096">
    <property type="entry name" value="ClpP/crotonase"/>
    <property type="match status" value="1"/>
</dbReference>
<dbReference type="PROSITE" id="PS50989">
    <property type="entry name" value="COA_CT_CTER"/>
    <property type="match status" value="1"/>
</dbReference>
<sequence>MKTTFLDFEQPIAELEAKIEELRFVQDDSAVDISEEIERLSKKSQQLTKDLYANLSPWQVSQIARHPQRPYTLDYVAELFTDFHELHGDRAYADDVSIVGGLARFGGHPCMVIGHQKGRDTKERAARNFGMPRPEGYRKAERLMRLAEKFGLPIFTFVDTPGAYPGIGAEERGQSEAIGRNLYVMAELKTPIITTVIGEGGSGGALAIAVGDTVMMLQFSTYSVISPEGCASILWKSAAKAPEAAEALGLTAHRLKALGLIDKIINEPLGGAHRDPKGMAALLRRALADSLRQFQGMSIDALRERRFERLMAYGKFKETTPGA</sequence>
<evidence type="ECO:0000255" key="1">
    <source>
        <dbReference type="HAMAP-Rule" id="MF_00823"/>
    </source>
</evidence>
<evidence type="ECO:0000255" key="2">
    <source>
        <dbReference type="PROSITE-ProRule" id="PRU01137"/>
    </source>
</evidence>